<protein>
    <recommendedName>
        <fullName>Semaphorin-4F</fullName>
    </recommendedName>
    <alternativeName>
        <fullName>Semaphorin-W</fullName>
        <shortName>Sema W</shortName>
    </alternativeName>
</protein>
<accession>Q9Z123</accession>
<accession>Q505G0</accession>
<accession>Q9R1Y1</accession>
<proteinExistence type="evidence at protein level"/>
<organism>
    <name type="scientific">Mus musculus</name>
    <name type="common">Mouse</name>
    <dbReference type="NCBI Taxonomy" id="10090"/>
    <lineage>
        <taxon>Eukaryota</taxon>
        <taxon>Metazoa</taxon>
        <taxon>Chordata</taxon>
        <taxon>Craniata</taxon>
        <taxon>Vertebrata</taxon>
        <taxon>Euteleostomi</taxon>
        <taxon>Mammalia</taxon>
        <taxon>Eutheria</taxon>
        <taxon>Euarchontoglires</taxon>
        <taxon>Glires</taxon>
        <taxon>Rodentia</taxon>
        <taxon>Myomorpha</taxon>
        <taxon>Muroidea</taxon>
        <taxon>Muridae</taxon>
        <taxon>Murinae</taxon>
        <taxon>Mus</taxon>
        <taxon>Mus</taxon>
    </lineage>
</organism>
<name>SEM4F_MOUSE</name>
<comment type="function">
    <text evidence="1 6">Probable cell surface receptor that regulates oligodendroglial precursor cell migration (PubMed:21945643). Might also regulate differentiation of oligodendroglial precursor cells (By similarity). Has growth cone collapse activity against retinal ganglion-cell axons (By similarity).</text>
</comment>
<comment type="subunit">
    <text evidence="5">Interacts (via PDZ-binding motif) with DLG4/SAP90 (via PDZ domain 2); this interaction may promote translocation of DLG4/SAP90 to the membrane.</text>
</comment>
<comment type="subcellular location">
    <subcellularLocation>
        <location evidence="7">Cell membrane</location>
        <topology evidence="2">Single-pass type I membrane protein</topology>
    </subcellularLocation>
    <subcellularLocation>
        <location evidence="1">Postsynaptic density</location>
    </subcellularLocation>
    <subcellularLocation>
        <location evidence="6">Perikaryon</location>
    </subcellularLocation>
    <subcellularLocation>
        <location evidence="6">Cell projection</location>
        <location evidence="6">Dendrite</location>
    </subcellularLocation>
    <text evidence="6">Colocalizes with DLG4 at synapses.</text>
</comment>
<comment type="tissue specificity">
    <text evidence="6">Expressed throughout the adult brain, where it shows particularly strong expression in the hippocampus, corpus callosum, granular layer and deep nuclei of the cerebellum, and the mitral layer of the olfactory bulb (at protein level) (PubMed:21945643). At the cellular level, detected in neuronal precursors, postmitotic neurons, pyramidal neurons, and glial cells including mature oligodendocytes and oligodendroglial precursor cells (at protein level) (PubMed:21945643).</text>
</comment>
<comment type="developmental stage">
    <text evidence="6">During 14 dpc expression is abundant in the cerebral cortex, hippocampus, brain stem and the mitral and glomerular layers of the olfactory bulb, expression in the olfactory bulb remains evident into adulthood (at protein level) (PubMed:21945643). Expressed in proliferative layers and oligodendroglial precursor cells (OPCs) during embryonic development (14-16 dpc), in regions such as the ganglionic eminence, mamillothalamic tract, neuroepithelium, and cortical plate (at protein level) (PubMed:21945643). Expressed in migrating OPCs along the optic nerve at 16.5 dpc (at protein level) (PubMed:21945643). During late embryonic development (18 dpc) expression is abundant in pyramidal and granular cells of the hippocampus, and OPCs in the migratory pathway and embryonic fimbria of the hippocampus (at protein level) (PubMed:21945643). At postnatal day 1 (P1) expression is abundant in the corpus callosum, anterior commissure, and several nerve nuclei in the hindbrain, such as the oculomotor nucleus, the periaqueductal gray area, the facial nucleus, the colliculli, and the raphe and pararubral nuclei, as well as in the proliferative layers of the anterior subventricular zone, with expression remaining evident into adulthood (at protein level) (PubMed:21945643). A significant abundance of protein is apparent in the arcuate and posterior hypothalamic nuclei at P10, and additionally in hypothalamic OPCs, expression becomes evident in the arcuate nucleus at P15 (at protein level) (PubMed:21945643). Abundant expression throughout the embryonic brain from 14 dpc onwards with decreased expression in all areas of the brain in adulthood, however expression remains relatively abundant (PubMed:21945643).</text>
</comment>
<comment type="similarity">
    <text evidence="7">Belongs to the semaphorin family.</text>
</comment>
<gene>
    <name type="primary">Sema4f</name>
    <name type="synonym">Semaw</name>
</gene>
<reference key="1">
    <citation type="journal article" date="1999" name="Proc. Natl. Acad. Sci. U.S.A.">
        <title>Cloning, expression, and genetic mapping of Sema W, a member of the semaphorin family.</title>
        <authorList>
            <person name="Encinas J.A."/>
            <person name="Kikuchi K."/>
            <person name="Chedotal A."/>
            <person name="de Castro F."/>
            <person name="Goodman C.S."/>
            <person name="Kimura T."/>
        </authorList>
    </citation>
    <scope>NUCLEOTIDE SEQUENCE [GENOMIC DNA / MRNA]</scope>
    <source>
        <strain>129/SvJ</strain>
        <strain>BALB/cJ</strain>
        <tissue>Brain</tissue>
    </source>
</reference>
<reference key="2">
    <citation type="submission" date="2005-07" db="EMBL/GenBank/DDBJ databases">
        <authorList>
            <person name="Mural R.J."/>
            <person name="Adams M.D."/>
            <person name="Myers E.W."/>
            <person name="Smith H.O."/>
            <person name="Venter J.C."/>
        </authorList>
    </citation>
    <scope>NUCLEOTIDE SEQUENCE [LARGE SCALE GENOMIC DNA]</scope>
</reference>
<reference key="3">
    <citation type="journal article" date="2004" name="Genome Res.">
        <title>The status, quality, and expansion of the NIH full-length cDNA project: the Mammalian Gene Collection (MGC).</title>
        <authorList>
            <consortium name="The MGC Project Team"/>
        </authorList>
    </citation>
    <scope>NUCLEOTIDE SEQUENCE [LARGE SCALE MRNA]</scope>
    <source>
        <strain>C57BL/6J</strain>
        <tissue>Brain</tissue>
    </source>
</reference>
<reference key="4">
    <citation type="journal article" date="2001" name="J. Neurochem.">
        <title>Semaphorin4F interacts with the synapse-associated protein SAP90/PSD-95.</title>
        <authorList>
            <person name="Schultze W."/>
            <person name="Eulenburg V."/>
            <person name="Lessmann V."/>
            <person name="Herrmann L."/>
            <person name="Dittmar T."/>
            <person name="Gundelfinger E.D."/>
            <person name="Heumann R."/>
            <person name="Erdmann K.S."/>
        </authorList>
    </citation>
    <scope>INTERACTION WITH DLG4</scope>
    <scope>MOTIF</scope>
    <scope>MUTAGENESIS OF 775-THR--ILE-777</scope>
</reference>
<reference key="5">
    <citation type="journal article" date="2010" name="Cell">
        <title>A tissue-specific atlas of mouse protein phosphorylation and expression.</title>
        <authorList>
            <person name="Huttlin E.L."/>
            <person name="Jedrychowski M.P."/>
            <person name="Elias J.E."/>
            <person name="Goswami T."/>
            <person name="Rad R."/>
            <person name="Beausoleil S.A."/>
            <person name="Villen J."/>
            <person name="Haas W."/>
            <person name="Sowa M.E."/>
            <person name="Gygi S.P."/>
        </authorList>
    </citation>
    <scope>PHOSPHORYLATION [LARGE SCALE ANALYSIS] AT SER-725 AND SER-727</scope>
    <scope>IDENTIFICATION BY MASS SPECTROMETRY [LARGE SCALE ANALYSIS]</scope>
    <source>
        <tissue>Brain</tissue>
    </source>
</reference>
<reference key="6">
    <citation type="journal article" date="2012" name="Mol. Cell. Neurosci.">
        <title>Expression of Semaphorin 4F in neurons and brain oligodendrocytes and the regulation of oligodendrocyte precursor migration in the optic nerve.</title>
        <authorList>
            <person name="Armendariz B.G."/>
            <person name="Bribian A."/>
            <person name="Perez-Martinez E."/>
            <person name="Martinez A."/>
            <person name="de Castro F."/>
            <person name="Soriano E."/>
            <person name="Burgaya F."/>
        </authorList>
    </citation>
    <scope>FUNCTION</scope>
    <scope>SUBCELLULAR LOCATION</scope>
    <scope>TISSUE SPECIFICITY</scope>
    <scope>DEVELOPMENTAL STAGE</scope>
</reference>
<dbReference type="EMBL" id="AB021291">
    <property type="protein sequence ID" value="BAA75630.1"/>
    <property type="molecule type" value="mRNA"/>
</dbReference>
<dbReference type="EMBL" id="AB022316">
    <property type="protein sequence ID" value="BAA75634.1"/>
    <property type="molecule type" value="Genomic_DNA"/>
</dbReference>
<dbReference type="EMBL" id="CH466523">
    <property type="protein sequence ID" value="EDK99043.1"/>
    <property type="molecule type" value="Genomic_DNA"/>
</dbReference>
<dbReference type="EMBL" id="BC094567">
    <property type="protein sequence ID" value="AAH94567.1"/>
    <property type="molecule type" value="mRNA"/>
</dbReference>
<dbReference type="CCDS" id="CCDS20264.1"/>
<dbReference type="RefSeq" id="NP_035480.3">
    <property type="nucleotide sequence ID" value="NM_011350.4"/>
</dbReference>
<dbReference type="SMR" id="Q9Z123"/>
<dbReference type="BioGRID" id="203170">
    <property type="interactions" value="5"/>
</dbReference>
<dbReference type="FunCoup" id="Q9Z123">
    <property type="interactions" value="634"/>
</dbReference>
<dbReference type="STRING" id="10090.ENSMUSP00000000641"/>
<dbReference type="GlyConnect" id="2699">
    <property type="glycosylation" value="4 N-Linked glycans (2 sites)"/>
</dbReference>
<dbReference type="GlyCosmos" id="Q9Z123">
    <property type="glycosylation" value="3 sites, 4 glycans"/>
</dbReference>
<dbReference type="GlyGen" id="Q9Z123">
    <property type="glycosylation" value="3 sites, 5 N-linked glycans (2 sites)"/>
</dbReference>
<dbReference type="iPTMnet" id="Q9Z123"/>
<dbReference type="PhosphoSitePlus" id="Q9Z123"/>
<dbReference type="PaxDb" id="10090-ENSMUSP00000000641"/>
<dbReference type="ProteomicsDB" id="256943"/>
<dbReference type="Antibodypedia" id="47483">
    <property type="antibodies" value="158 antibodies from 25 providers"/>
</dbReference>
<dbReference type="DNASU" id="20355"/>
<dbReference type="Ensembl" id="ENSMUST00000000641.15">
    <property type="protein sequence ID" value="ENSMUSP00000000641.10"/>
    <property type="gene ID" value="ENSMUSG00000000627.16"/>
</dbReference>
<dbReference type="GeneID" id="20355"/>
<dbReference type="KEGG" id="mmu:20355"/>
<dbReference type="UCSC" id="uc009clo.2">
    <property type="organism name" value="mouse"/>
</dbReference>
<dbReference type="AGR" id="MGI:1340055"/>
<dbReference type="CTD" id="10505"/>
<dbReference type="MGI" id="MGI:1340055">
    <property type="gene designation" value="Sema4f"/>
</dbReference>
<dbReference type="VEuPathDB" id="HostDB:ENSMUSG00000000627"/>
<dbReference type="eggNOG" id="KOG3611">
    <property type="taxonomic scope" value="Eukaryota"/>
</dbReference>
<dbReference type="GeneTree" id="ENSGT00940000159592"/>
<dbReference type="HOGENOM" id="CLU_009051_6_0_1"/>
<dbReference type="InParanoid" id="Q9Z123"/>
<dbReference type="OMA" id="APLAKCE"/>
<dbReference type="OrthoDB" id="9988752at2759"/>
<dbReference type="PhylomeDB" id="Q9Z123"/>
<dbReference type="TreeFam" id="TF352903"/>
<dbReference type="Reactome" id="R-MMU-9696264">
    <property type="pathway name" value="RND3 GTPase cycle"/>
</dbReference>
<dbReference type="BioGRID-ORCS" id="20355">
    <property type="hits" value="5 hits in 77 CRISPR screens"/>
</dbReference>
<dbReference type="PRO" id="PR:Q9Z123"/>
<dbReference type="Proteomes" id="UP000000589">
    <property type="component" value="Chromosome 6"/>
</dbReference>
<dbReference type="RNAct" id="Q9Z123">
    <property type="molecule type" value="protein"/>
</dbReference>
<dbReference type="Bgee" id="ENSMUSG00000000627">
    <property type="expression patterns" value="Expressed in trigeminal ganglion and 192 other cell types or tissues"/>
</dbReference>
<dbReference type="ExpressionAtlas" id="Q9Z123">
    <property type="expression patterns" value="baseline and differential"/>
</dbReference>
<dbReference type="GO" id="GO:0030425">
    <property type="term" value="C:dendrite"/>
    <property type="evidence" value="ECO:0007669"/>
    <property type="project" value="UniProtKB-SubCell"/>
</dbReference>
<dbReference type="GO" id="GO:0005783">
    <property type="term" value="C:endoplasmic reticulum"/>
    <property type="evidence" value="ECO:0007669"/>
    <property type="project" value="Ensembl"/>
</dbReference>
<dbReference type="GO" id="GO:0098978">
    <property type="term" value="C:glutamatergic synapse"/>
    <property type="evidence" value="ECO:0007669"/>
    <property type="project" value="Ensembl"/>
</dbReference>
<dbReference type="GO" id="GO:0016020">
    <property type="term" value="C:membrane"/>
    <property type="evidence" value="ECO:0000266"/>
    <property type="project" value="MGI"/>
</dbReference>
<dbReference type="GO" id="GO:0043204">
    <property type="term" value="C:perikaryon"/>
    <property type="evidence" value="ECO:0007669"/>
    <property type="project" value="UniProtKB-SubCell"/>
</dbReference>
<dbReference type="GO" id="GO:0005886">
    <property type="term" value="C:plasma membrane"/>
    <property type="evidence" value="ECO:0000314"/>
    <property type="project" value="MGI"/>
</dbReference>
<dbReference type="GO" id="GO:0098839">
    <property type="term" value="C:postsynaptic density membrane"/>
    <property type="evidence" value="ECO:0007669"/>
    <property type="project" value="Ensembl"/>
</dbReference>
<dbReference type="GO" id="GO:0045211">
    <property type="term" value="C:postsynaptic membrane"/>
    <property type="evidence" value="ECO:0000266"/>
    <property type="project" value="MGI"/>
</dbReference>
<dbReference type="GO" id="GO:0045202">
    <property type="term" value="C:synapse"/>
    <property type="evidence" value="ECO:0000266"/>
    <property type="project" value="MGI"/>
</dbReference>
<dbReference type="GO" id="GO:0030215">
    <property type="term" value="F:semaphorin receptor binding"/>
    <property type="evidence" value="ECO:0007669"/>
    <property type="project" value="InterPro"/>
</dbReference>
<dbReference type="GO" id="GO:0048675">
    <property type="term" value="P:axon extension"/>
    <property type="evidence" value="ECO:0000266"/>
    <property type="project" value="MGI"/>
</dbReference>
<dbReference type="GO" id="GO:0030517">
    <property type="term" value="P:negative regulation of axon extension"/>
    <property type="evidence" value="ECO:0000266"/>
    <property type="project" value="MGI"/>
</dbReference>
<dbReference type="GO" id="GO:0031290">
    <property type="term" value="P:retinal ganglion cell axon guidance"/>
    <property type="evidence" value="ECO:0000266"/>
    <property type="project" value="MGI"/>
</dbReference>
<dbReference type="CDD" id="cd11261">
    <property type="entry name" value="Sema_4F"/>
    <property type="match status" value="1"/>
</dbReference>
<dbReference type="FunFam" id="2.130.10.10:FF:000351">
    <property type="entry name" value="semaphorin-4F isoform X1"/>
    <property type="match status" value="1"/>
</dbReference>
<dbReference type="FunFam" id="3.30.1680.10:FF:000010">
    <property type="entry name" value="semaphorin-4F isoform X1"/>
    <property type="match status" value="1"/>
</dbReference>
<dbReference type="Gene3D" id="3.30.1680.10">
    <property type="entry name" value="ligand-binding face of the semaphorins, domain 2"/>
    <property type="match status" value="1"/>
</dbReference>
<dbReference type="Gene3D" id="2.130.10.10">
    <property type="entry name" value="YVTN repeat-like/Quinoprotein amine dehydrogenase"/>
    <property type="match status" value="1"/>
</dbReference>
<dbReference type="InterPro" id="IPR002165">
    <property type="entry name" value="Plexin_repeat"/>
</dbReference>
<dbReference type="InterPro" id="IPR016201">
    <property type="entry name" value="PSI"/>
</dbReference>
<dbReference type="InterPro" id="IPR047085">
    <property type="entry name" value="Sem4F_Sema_dom"/>
</dbReference>
<dbReference type="InterPro" id="IPR045791">
    <property type="entry name" value="Sema4F_C"/>
</dbReference>
<dbReference type="InterPro" id="IPR001627">
    <property type="entry name" value="Semap_dom"/>
</dbReference>
<dbReference type="InterPro" id="IPR036352">
    <property type="entry name" value="Semap_dom_sf"/>
</dbReference>
<dbReference type="InterPro" id="IPR027231">
    <property type="entry name" value="Semaphorin"/>
</dbReference>
<dbReference type="InterPro" id="IPR015943">
    <property type="entry name" value="WD40/YVTN_repeat-like_dom_sf"/>
</dbReference>
<dbReference type="PANTHER" id="PTHR11036">
    <property type="entry name" value="SEMAPHORIN"/>
    <property type="match status" value="1"/>
</dbReference>
<dbReference type="PANTHER" id="PTHR11036:SF72">
    <property type="entry name" value="SEMAPHORIN-4F"/>
    <property type="match status" value="1"/>
</dbReference>
<dbReference type="Pfam" id="PF01437">
    <property type="entry name" value="PSI"/>
    <property type="match status" value="1"/>
</dbReference>
<dbReference type="Pfam" id="PF01403">
    <property type="entry name" value="Sema"/>
    <property type="match status" value="1"/>
</dbReference>
<dbReference type="Pfam" id="PF19428">
    <property type="entry name" value="Sema4F_C"/>
    <property type="match status" value="1"/>
</dbReference>
<dbReference type="SMART" id="SM00423">
    <property type="entry name" value="PSI"/>
    <property type="match status" value="1"/>
</dbReference>
<dbReference type="SMART" id="SM00630">
    <property type="entry name" value="Sema"/>
    <property type="match status" value="1"/>
</dbReference>
<dbReference type="SUPFAM" id="SSF103575">
    <property type="entry name" value="Plexin repeat"/>
    <property type="match status" value="1"/>
</dbReference>
<dbReference type="SUPFAM" id="SSF101912">
    <property type="entry name" value="Sema domain"/>
    <property type="match status" value="1"/>
</dbReference>
<dbReference type="PROSITE" id="PS51004">
    <property type="entry name" value="SEMA"/>
    <property type="match status" value="1"/>
</dbReference>
<feature type="signal peptide" evidence="2">
    <location>
        <begin position="1"/>
        <end position="40"/>
    </location>
</feature>
<feature type="chain" id="PRO_0000032331" description="Semaphorin-4F">
    <location>
        <begin position="41"/>
        <end position="777"/>
    </location>
</feature>
<feature type="topological domain" description="Extracellular" evidence="2">
    <location>
        <begin position="41"/>
        <end position="667"/>
    </location>
</feature>
<feature type="transmembrane region" description="Helical" evidence="2">
    <location>
        <begin position="668"/>
        <end position="688"/>
    </location>
</feature>
<feature type="topological domain" description="Cytoplasmic" evidence="2">
    <location>
        <begin position="689"/>
        <end position="777"/>
    </location>
</feature>
<feature type="domain" description="Sema" evidence="3">
    <location>
        <begin position="48"/>
        <end position="516"/>
    </location>
</feature>
<feature type="domain" description="PSI">
    <location>
        <begin position="518"/>
        <end position="569"/>
    </location>
</feature>
<feature type="domain" description="Ig-like C2-type">
    <location>
        <begin position="586"/>
        <end position="641"/>
    </location>
</feature>
<feature type="region of interest" description="Disordered" evidence="4">
    <location>
        <begin position="703"/>
        <end position="742"/>
    </location>
</feature>
<feature type="short sequence motif" description="PDZ-binding" evidence="5">
    <location>
        <begin position="775"/>
        <end position="777"/>
    </location>
</feature>
<feature type="modified residue" description="Phosphoserine" evidence="8">
    <location>
        <position position="725"/>
    </location>
</feature>
<feature type="modified residue" description="Phosphoserine" evidence="8">
    <location>
        <position position="727"/>
    </location>
</feature>
<feature type="glycosylation site" description="N-linked (GlcNAc...) asparagine" evidence="2">
    <location>
        <position position="70"/>
    </location>
</feature>
<feature type="glycosylation site" description="N-linked (GlcNAc...) asparagine" evidence="2">
    <location>
        <position position="139"/>
    </location>
</feature>
<feature type="glycosylation site" description="N-linked (GlcNAc...) asparagine" evidence="2">
    <location>
        <position position="515"/>
    </location>
</feature>
<feature type="disulfide bond" evidence="3">
    <location>
        <begin position="118"/>
        <end position="128"/>
    </location>
</feature>
<feature type="disulfide bond" evidence="3">
    <location>
        <begin position="146"/>
        <end position="155"/>
    </location>
</feature>
<feature type="disulfide bond" evidence="3">
    <location>
        <begin position="279"/>
        <end position="390"/>
    </location>
</feature>
<feature type="disulfide bond" evidence="3">
    <location>
        <begin position="303"/>
        <end position="349"/>
    </location>
</feature>
<feature type="disulfide bond" evidence="3">
    <location>
        <begin position="519"/>
        <end position="536"/>
    </location>
</feature>
<feature type="disulfide bond" evidence="3">
    <location>
        <begin position="528"/>
        <end position="545"/>
    </location>
</feature>
<feature type="disulfide bond" evidence="3">
    <location>
        <begin position="593"/>
        <end position="634"/>
    </location>
</feature>
<feature type="sequence variant" description="In strain: BALB/c.">
    <original>T</original>
    <variation>P</variation>
    <location>
        <position position="490"/>
    </location>
</feature>
<feature type="sequence variant" description="In strain: BALB/c.">
    <original>A</original>
    <variation>S</variation>
    <location>
        <position position="659"/>
    </location>
</feature>
<feature type="mutagenesis site" description="Loss of interaction with DLG4." evidence="5">
    <location>
        <begin position="775"/>
        <end position="777"/>
    </location>
</feature>
<evidence type="ECO:0000250" key="1">
    <source>
        <dbReference type="UniProtKB" id="Q9Z143"/>
    </source>
</evidence>
<evidence type="ECO:0000255" key="2"/>
<evidence type="ECO:0000255" key="3">
    <source>
        <dbReference type="PROSITE-ProRule" id="PRU00352"/>
    </source>
</evidence>
<evidence type="ECO:0000256" key="4">
    <source>
        <dbReference type="SAM" id="MobiDB-lite"/>
    </source>
</evidence>
<evidence type="ECO:0000269" key="5">
    <source>
    </source>
</evidence>
<evidence type="ECO:0000269" key="6">
    <source>
    </source>
</evidence>
<evidence type="ECO:0000305" key="7"/>
<evidence type="ECO:0007744" key="8">
    <source>
    </source>
</evidence>
<sequence>MLARAERPRPGPRPPPVSLFPPPSSLLLLLLAMLSAPVCGRVPRSVPRTSLPISEADSYLTRFAAPHTYNYSALLVDPASHTLYVGARDSIFALTLPFSGEKPRRIDWMVPETHRQNCRKKGKKEDECHNFIQILAIANASHLLTCGTFAFDPKCGVIDVSSFQQVERLESGRGKCPFEPAQRSAAVMAGGVLYTATVKNFLGTEPIISRAVGRAEDWIRTETLSSWLNAPAFVAAMVLSPAEWGDEDGDDEIFFFFTETSRVLDSYERIKVPRVARVCAGDLGGRKTLQQRWTTFLKADLLCPGPEHGRASGVLQDMTELRPQPGAGTPLFYGIFSSQWEGAAISAVCAFRPQDIRAVLNGPFRELKHDCNRGLPVMDNEVPQPRPGECITNNMKFQQFGSSLSLPDRVLTFIRDHPLMDRPVFPADGRPLLVTTDTAYLRVVAHRVTSLSGKEYDVLYLGTEDGHLHRAVRIGAQLSVLEDLALFPETQPVESMKLYHDWLLVGSHTEVTQVNTSNCGRLQSCSECILAQDPVCAWSFRLDACVAHAGEHRGMVQDIESADVSSLCPKEPGEHPVVFEVPVATVGHVVLPCSPSSAWASCVWHQPSGVTSLTPRRDGLEVVVTPGAMGAYACECQEGGAARVVAAYSLVWGSQRGPANRAHTVVGAGLVGFFLGVLAASLTLLLIGRRQQRRRQRELLARDKVGLDLGAPPSGTTSYSQDPPSPSPEDERLPLALGKRGSGFGGFPPPFLLDSCPSPAHIRLTGAPLATCDETSI</sequence>
<keyword id="KW-1003">Cell membrane</keyword>
<keyword id="KW-0966">Cell projection</keyword>
<keyword id="KW-0217">Developmental protein</keyword>
<keyword id="KW-0221">Differentiation</keyword>
<keyword id="KW-1015">Disulfide bond</keyword>
<keyword id="KW-0325">Glycoprotein</keyword>
<keyword id="KW-0393">Immunoglobulin domain</keyword>
<keyword id="KW-0472">Membrane</keyword>
<keyword id="KW-0524">Neurogenesis</keyword>
<keyword id="KW-0597">Phosphoprotein</keyword>
<keyword id="KW-1185">Reference proteome</keyword>
<keyword id="KW-0732">Signal</keyword>
<keyword id="KW-0770">Synapse</keyword>
<keyword id="KW-0812">Transmembrane</keyword>
<keyword id="KW-1133">Transmembrane helix</keyword>